<dbReference type="EMBL" id="AM286415">
    <property type="protein sequence ID" value="CAL13833.1"/>
    <property type="molecule type" value="Genomic_DNA"/>
</dbReference>
<dbReference type="RefSeq" id="WP_005174342.1">
    <property type="nucleotide sequence ID" value="NC_008800.1"/>
</dbReference>
<dbReference type="RefSeq" id="YP_001007960.1">
    <property type="nucleotide sequence ID" value="NC_008800.1"/>
</dbReference>
<dbReference type="SMR" id="A1JRJ8"/>
<dbReference type="KEGG" id="yen:YE3809"/>
<dbReference type="PATRIC" id="fig|393305.7.peg.4056"/>
<dbReference type="eggNOG" id="COG2717">
    <property type="taxonomic scope" value="Bacteria"/>
</dbReference>
<dbReference type="HOGENOM" id="CLU_080662_1_0_6"/>
<dbReference type="OrthoDB" id="9788328at2"/>
<dbReference type="Proteomes" id="UP000000642">
    <property type="component" value="Chromosome"/>
</dbReference>
<dbReference type="GO" id="GO:0005886">
    <property type="term" value="C:plasma membrane"/>
    <property type="evidence" value="ECO:0007669"/>
    <property type="project" value="UniProtKB-SubCell"/>
</dbReference>
<dbReference type="GO" id="GO:0009055">
    <property type="term" value="F:electron transfer activity"/>
    <property type="evidence" value="ECO:0007669"/>
    <property type="project" value="UniProtKB-UniRule"/>
</dbReference>
<dbReference type="GO" id="GO:0010181">
    <property type="term" value="F:FMN binding"/>
    <property type="evidence" value="ECO:0007669"/>
    <property type="project" value="UniProtKB-UniRule"/>
</dbReference>
<dbReference type="GO" id="GO:0020037">
    <property type="term" value="F:heme binding"/>
    <property type="evidence" value="ECO:0007669"/>
    <property type="project" value="UniProtKB-UniRule"/>
</dbReference>
<dbReference type="GO" id="GO:0046872">
    <property type="term" value="F:metal ion binding"/>
    <property type="evidence" value="ECO:0007669"/>
    <property type="project" value="UniProtKB-KW"/>
</dbReference>
<dbReference type="GO" id="GO:0016679">
    <property type="term" value="F:oxidoreductase activity, acting on diphenols and related substances as donors"/>
    <property type="evidence" value="ECO:0007669"/>
    <property type="project" value="TreeGrafter"/>
</dbReference>
<dbReference type="GO" id="GO:0030091">
    <property type="term" value="P:protein repair"/>
    <property type="evidence" value="ECO:0007669"/>
    <property type="project" value="UniProtKB-UniRule"/>
</dbReference>
<dbReference type="HAMAP" id="MF_01207">
    <property type="entry name" value="MsrQ"/>
    <property type="match status" value="1"/>
</dbReference>
<dbReference type="InterPro" id="IPR013130">
    <property type="entry name" value="Fe3_Rdtase_TM_dom"/>
</dbReference>
<dbReference type="InterPro" id="IPR022837">
    <property type="entry name" value="MsrQ-like"/>
</dbReference>
<dbReference type="NCBIfam" id="NF003832">
    <property type="entry name" value="PRK05419.1-4"/>
    <property type="match status" value="1"/>
</dbReference>
<dbReference type="PANTHER" id="PTHR36964">
    <property type="entry name" value="PROTEIN-METHIONINE-SULFOXIDE REDUCTASE HEME-BINDING SUBUNIT MSRQ"/>
    <property type="match status" value="1"/>
</dbReference>
<dbReference type="PANTHER" id="PTHR36964:SF1">
    <property type="entry name" value="PROTEIN-METHIONINE-SULFOXIDE REDUCTASE HEME-BINDING SUBUNIT MSRQ"/>
    <property type="match status" value="1"/>
</dbReference>
<dbReference type="Pfam" id="PF01794">
    <property type="entry name" value="Ferric_reduct"/>
    <property type="match status" value="1"/>
</dbReference>
<organism>
    <name type="scientific">Yersinia enterocolitica serotype O:8 / biotype 1B (strain NCTC 13174 / 8081)</name>
    <dbReference type="NCBI Taxonomy" id="393305"/>
    <lineage>
        <taxon>Bacteria</taxon>
        <taxon>Pseudomonadati</taxon>
        <taxon>Pseudomonadota</taxon>
        <taxon>Gammaproteobacteria</taxon>
        <taxon>Enterobacterales</taxon>
        <taxon>Yersiniaceae</taxon>
        <taxon>Yersinia</taxon>
    </lineage>
</organism>
<evidence type="ECO:0000255" key="1">
    <source>
        <dbReference type="HAMAP-Rule" id="MF_01207"/>
    </source>
</evidence>
<reference key="1">
    <citation type="journal article" date="2006" name="PLoS Genet.">
        <title>The complete genome sequence and comparative genome analysis of the high pathogenicity Yersinia enterocolitica strain 8081.</title>
        <authorList>
            <person name="Thomson N.R."/>
            <person name="Howard S."/>
            <person name="Wren B.W."/>
            <person name="Holden M.T.G."/>
            <person name="Crossman L."/>
            <person name="Challis G.L."/>
            <person name="Churcher C."/>
            <person name="Mungall K."/>
            <person name="Brooks K."/>
            <person name="Chillingworth T."/>
            <person name="Feltwell T."/>
            <person name="Abdellah Z."/>
            <person name="Hauser H."/>
            <person name="Jagels K."/>
            <person name="Maddison M."/>
            <person name="Moule S."/>
            <person name="Sanders M."/>
            <person name="Whitehead S."/>
            <person name="Quail M.A."/>
            <person name="Dougan G."/>
            <person name="Parkhill J."/>
            <person name="Prentice M.B."/>
        </authorList>
    </citation>
    <scope>NUCLEOTIDE SEQUENCE [LARGE SCALE GENOMIC DNA]</scope>
    <source>
        <strain>NCTC 13174 / 8081</strain>
    </source>
</reference>
<comment type="function">
    <text evidence="1">Part of the MsrPQ system that repairs oxidized periplasmic proteins containing methionine sulfoxide residues (Met-O), using respiratory chain electrons. Thus protects these proteins from oxidative-stress damage caused by reactive species of oxygen and chlorine generated by the host defense mechanisms. MsrPQ is essential for the maintenance of envelope integrity under bleach stress, rescuing a wide series of structurally unrelated periplasmic proteins from methionine oxidation. MsrQ provides electrons for reduction to the reductase catalytic subunit MsrP, using the quinone pool of the respiratory chain.</text>
</comment>
<comment type="cofactor">
    <cofactor evidence="1">
        <name>FMN</name>
        <dbReference type="ChEBI" id="CHEBI:58210"/>
    </cofactor>
    <text evidence="1">Binds 1 FMN per subunit.</text>
</comment>
<comment type="cofactor">
    <cofactor evidence="1">
        <name>heme b</name>
        <dbReference type="ChEBI" id="CHEBI:60344"/>
    </cofactor>
    <text evidence="1">Binds 1 heme b (iron(II)-protoporphyrin IX) group per subunit.</text>
</comment>
<comment type="subunit">
    <text evidence="1">Heterodimer of a catalytic subunit (MsrP) and a heme-binding subunit (MsrQ).</text>
</comment>
<comment type="subcellular location">
    <subcellularLocation>
        <location evidence="1">Cell inner membrane</location>
        <topology evidence="1">Multi-pass membrane protein</topology>
    </subcellularLocation>
</comment>
<comment type="similarity">
    <text evidence="1">Belongs to the MsrQ family.</text>
</comment>
<proteinExistence type="inferred from homology"/>
<gene>
    <name evidence="1" type="primary">msrQ</name>
    <name type="ordered locus">YE3809</name>
</gene>
<feature type="chain" id="PRO_1000066193" description="Protein-methionine-sulfoxide reductase heme-binding subunit MsrQ">
    <location>
        <begin position="1"/>
        <end position="199"/>
    </location>
</feature>
<feature type="transmembrane region" description="Helical" evidence="1">
    <location>
        <begin position="10"/>
        <end position="30"/>
    </location>
</feature>
<feature type="transmembrane region" description="Helical" evidence="1">
    <location>
        <begin position="79"/>
        <end position="99"/>
    </location>
</feature>
<feature type="transmembrane region" description="Helical" evidence="1">
    <location>
        <begin position="118"/>
        <end position="138"/>
    </location>
</feature>
<feature type="transmembrane region" description="Helical" evidence="1">
    <location>
        <begin position="147"/>
        <end position="167"/>
    </location>
</feature>
<feature type="transmembrane region" description="Helical" evidence="1">
    <location>
        <begin position="169"/>
        <end position="189"/>
    </location>
</feature>
<accession>A1JRJ8</accession>
<keyword id="KW-0997">Cell inner membrane</keyword>
<keyword id="KW-1003">Cell membrane</keyword>
<keyword id="KW-0249">Electron transport</keyword>
<keyword id="KW-0285">Flavoprotein</keyword>
<keyword id="KW-0288">FMN</keyword>
<keyword id="KW-0349">Heme</keyword>
<keyword id="KW-0408">Iron</keyword>
<keyword id="KW-0472">Membrane</keyword>
<keyword id="KW-0479">Metal-binding</keyword>
<keyword id="KW-0812">Transmembrane</keyword>
<keyword id="KW-1133">Transmembrane helix</keyword>
<keyword id="KW-0813">Transport</keyword>
<protein>
    <recommendedName>
        <fullName evidence="1">Protein-methionine-sulfoxide reductase heme-binding subunit MsrQ</fullName>
    </recommendedName>
    <alternativeName>
        <fullName evidence="1">Flavocytochrome MsrQ</fullName>
    </alternativeName>
</protein>
<name>MSRQ_YERE8</name>
<sequence>MRLTLRQIKWLKVAIWLAAALPFLWLILSVDQGWFSADPAKDIQHFTGRMTLKLLLATLLVTPLARYGKQPLLIRCRRLLGLWCFAWGTLHLVSYSVLELGLSNIGLLGRELVTRPYLTLGIISWLLLLSLAVTSTLWAQRKMGANWQKLHNLVYVVAILAPIHYLWSVKTLSPLPIIYAVTAAILLALRYKKFRQWCR</sequence>